<gene>
    <name evidence="1" type="primary">hrcA</name>
    <name type="ordered locus">Rcas_4390</name>
</gene>
<sequence length="359" mass="40311">MTTDLTDRRQLILKLAIQEFIESSQPVASELLVRKYRLNVSPATVRNELAALEELGYLTHLHTSAGRVPTDAGYRYFVENLMDRTPLSATEQRTIRHQFYQVRSELDQWIQLAGAVLARTAQNASVVTPPRAQQARLKHLELISIHDTTALMVLVLHDGTIRQQTLTLDMALSQEELSRRASRINERCADAPVERVEEFLKQERAHEPPGGDALACQVLDLIVKAMHQFNEHLNSDIHSDGLIEILNQPEFSQVERVRRMIEILQSRRALGTLIPRALSSSGVQVVIGGEHSYDEMREYSVVLSRYGGGEIVGVLGVIGPTRMAYPRAISAVRYISAVMSDLLAELYGIEGDTHWEVES</sequence>
<name>HRCA_ROSCS</name>
<evidence type="ECO:0000255" key="1">
    <source>
        <dbReference type="HAMAP-Rule" id="MF_00081"/>
    </source>
</evidence>
<organism>
    <name type="scientific">Roseiflexus castenholzii (strain DSM 13941 / HLO8)</name>
    <dbReference type="NCBI Taxonomy" id="383372"/>
    <lineage>
        <taxon>Bacteria</taxon>
        <taxon>Bacillati</taxon>
        <taxon>Chloroflexota</taxon>
        <taxon>Chloroflexia</taxon>
        <taxon>Chloroflexales</taxon>
        <taxon>Roseiflexineae</taxon>
        <taxon>Roseiflexaceae</taxon>
        <taxon>Roseiflexus</taxon>
    </lineage>
</organism>
<dbReference type="EMBL" id="CP000804">
    <property type="protein sequence ID" value="ABU60408.1"/>
    <property type="molecule type" value="Genomic_DNA"/>
</dbReference>
<dbReference type="RefSeq" id="WP_012122829.1">
    <property type="nucleotide sequence ID" value="NC_009767.1"/>
</dbReference>
<dbReference type="SMR" id="A7NS62"/>
<dbReference type="STRING" id="383372.Rcas_4390"/>
<dbReference type="KEGG" id="rca:Rcas_4390"/>
<dbReference type="eggNOG" id="COG1420">
    <property type="taxonomic scope" value="Bacteria"/>
</dbReference>
<dbReference type="HOGENOM" id="CLU_050019_1_0_0"/>
<dbReference type="OrthoDB" id="9783139at2"/>
<dbReference type="Proteomes" id="UP000000263">
    <property type="component" value="Chromosome"/>
</dbReference>
<dbReference type="GO" id="GO:0003677">
    <property type="term" value="F:DNA binding"/>
    <property type="evidence" value="ECO:0007669"/>
    <property type="project" value="InterPro"/>
</dbReference>
<dbReference type="GO" id="GO:0045892">
    <property type="term" value="P:negative regulation of DNA-templated transcription"/>
    <property type="evidence" value="ECO:0007669"/>
    <property type="project" value="UniProtKB-UniRule"/>
</dbReference>
<dbReference type="Gene3D" id="3.30.450.40">
    <property type="match status" value="1"/>
</dbReference>
<dbReference type="Gene3D" id="3.30.390.60">
    <property type="entry name" value="Heat-inducible transcription repressor hrca homolog, domain 3"/>
    <property type="match status" value="1"/>
</dbReference>
<dbReference type="Gene3D" id="1.10.10.10">
    <property type="entry name" value="Winged helix-like DNA-binding domain superfamily/Winged helix DNA-binding domain"/>
    <property type="match status" value="1"/>
</dbReference>
<dbReference type="HAMAP" id="MF_00081">
    <property type="entry name" value="HrcA"/>
    <property type="match status" value="1"/>
</dbReference>
<dbReference type="InterPro" id="IPR029016">
    <property type="entry name" value="GAF-like_dom_sf"/>
</dbReference>
<dbReference type="InterPro" id="IPR002571">
    <property type="entry name" value="HrcA"/>
</dbReference>
<dbReference type="InterPro" id="IPR021153">
    <property type="entry name" value="HrcA_C"/>
</dbReference>
<dbReference type="InterPro" id="IPR036388">
    <property type="entry name" value="WH-like_DNA-bd_sf"/>
</dbReference>
<dbReference type="InterPro" id="IPR036390">
    <property type="entry name" value="WH_DNA-bd_sf"/>
</dbReference>
<dbReference type="InterPro" id="IPR023120">
    <property type="entry name" value="WHTH_transcript_rep_HrcA_IDD"/>
</dbReference>
<dbReference type="NCBIfam" id="TIGR00331">
    <property type="entry name" value="hrcA"/>
    <property type="match status" value="1"/>
</dbReference>
<dbReference type="PANTHER" id="PTHR34824">
    <property type="entry name" value="HEAT-INDUCIBLE TRANSCRIPTION REPRESSOR HRCA"/>
    <property type="match status" value="1"/>
</dbReference>
<dbReference type="PANTHER" id="PTHR34824:SF1">
    <property type="entry name" value="HEAT-INDUCIBLE TRANSCRIPTION REPRESSOR HRCA"/>
    <property type="match status" value="1"/>
</dbReference>
<dbReference type="Pfam" id="PF01628">
    <property type="entry name" value="HrcA"/>
    <property type="match status" value="1"/>
</dbReference>
<dbReference type="PIRSF" id="PIRSF005485">
    <property type="entry name" value="HrcA"/>
    <property type="match status" value="1"/>
</dbReference>
<dbReference type="SUPFAM" id="SSF55781">
    <property type="entry name" value="GAF domain-like"/>
    <property type="match status" value="1"/>
</dbReference>
<dbReference type="SUPFAM" id="SSF46785">
    <property type="entry name" value="Winged helix' DNA-binding domain"/>
    <property type="match status" value="1"/>
</dbReference>
<protein>
    <recommendedName>
        <fullName evidence="1">Heat-inducible transcription repressor HrcA</fullName>
    </recommendedName>
</protein>
<comment type="function">
    <text evidence="1">Negative regulator of class I heat shock genes (grpE-dnaK-dnaJ and groELS operons). Prevents heat-shock induction of these operons.</text>
</comment>
<comment type="similarity">
    <text evidence="1">Belongs to the HrcA family.</text>
</comment>
<accession>A7NS62</accession>
<reference key="1">
    <citation type="submission" date="2007-08" db="EMBL/GenBank/DDBJ databases">
        <title>Complete sequence of Roseiflexus castenholzii DSM 13941.</title>
        <authorList>
            <consortium name="US DOE Joint Genome Institute"/>
            <person name="Copeland A."/>
            <person name="Lucas S."/>
            <person name="Lapidus A."/>
            <person name="Barry K."/>
            <person name="Glavina del Rio T."/>
            <person name="Dalin E."/>
            <person name="Tice H."/>
            <person name="Pitluck S."/>
            <person name="Thompson L.S."/>
            <person name="Brettin T."/>
            <person name="Bruce D."/>
            <person name="Detter J.C."/>
            <person name="Han C."/>
            <person name="Tapia R."/>
            <person name="Schmutz J."/>
            <person name="Larimer F."/>
            <person name="Land M."/>
            <person name="Hauser L."/>
            <person name="Kyrpides N."/>
            <person name="Mikhailova N."/>
            <person name="Bryant D.A."/>
            <person name="Hanada S."/>
            <person name="Tsukatani Y."/>
            <person name="Richardson P."/>
        </authorList>
    </citation>
    <scope>NUCLEOTIDE SEQUENCE [LARGE SCALE GENOMIC DNA]</scope>
    <source>
        <strain>DSM 13941 / HLO8</strain>
    </source>
</reference>
<keyword id="KW-1185">Reference proteome</keyword>
<keyword id="KW-0678">Repressor</keyword>
<keyword id="KW-0346">Stress response</keyword>
<keyword id="KW-0804">Transcription</keyword>
<keyword id="KW-0805">Transcription regulation</keyword>
<proteinExistence type="inferred from homology"/>
<feature type="chain" id="PRO_1000075292" description="Heat-inducible transcription repressor HrcA">
    <location>
        <begin position="1"/>
        <end position="359"/>
    </location>
</feature>